<dbReference type="PIR" id="S38768">
    <property type="entry name" value="S38768"/>
</dbReference>
<dbReference type="SMR" id="P80237"/>
<dbReference type="STRING" id="10141.ENSCPOP00000031940"/>
<dbReference type="InParanoid" id="P80237"/>
<dbReference type="Proteomes" id="UP000005447">
    <property type="component" value="Unassembled WGS sequence"/>
</dbReference>
<dbReference type="GO" id="GO:0005829">
    <property type="term" value="C:cytosol"/>
    <property type="evidence" value="ECO:0007669"/>
    <property type="project" value="TreeGrafter"/>
</dbReference>
<dbReference type="GO" id="GO:0016020">
    <property type="term" value="C:membrane"/>
    <property type="evidence" value="ECO:0007669"/>
    <property type="project" value="TreeGrafter"/>
</dbReference>
<dbReference type="GO" id="GO:0005096">
    <property type="term" value="F:GTPase activator activity"/>
    <property type="evidence" value="ECO:0007669"/>
    <property type="project" value="UniProtKB-KW"/>
</dbReference>
<dbReference type="GO" id="GO:0005094">
    <property type="term" value="F:Rho GDP-dissociation inhibitor activity"/>
    <property type="evidence" value="ECO:0007669"/>
    <property type="project" value="InterPro"/>
</dbReference>
<dbReference type="GO" id="GO:0007266">
    <property type="term" value="P:Rho protein signal transduction"/>
    <property type="evidence" value="ECO:0007669"/>
    <property type="project" value="InterPro"/>
</dbReference>
<dbReference type="GO" id="GO:0071526">
    <property type="term" value="P:semaphorin-plexin signaling pathway"/>
    <property type="evidence" value="ECO:0000250"/>
    <property type="project" value="UniProtKB"/>
</dbReference>
<dbReference type="FunFam" id="2.70.50.30:FF:000004">
    <property type="entry name" value="Rho GDP-dissociation inhibitor 1"/>
    <property type="match status" value="1"/>
</dbReference>
<dbReference type="Gene3D" id="2.70.50.30">
    <property type="entry name" value="Coagulation Factor XIII, subunit A, domain 1"/>
    <property type="match status" value="2"/>
</dbReference>
<dbReference type="InterPro" id="IPR014756">
    <property type="entry name" value="Ig_E-set"/>
</dbReference>
<dbReference type="InterPro" id="IPR000406">
    <property type="entry name" value="Rho_GDI"/>
</dbReference>
<dbReference type="InterPro" id="IPR024792">
    <property type="entry name" value="RhoGDI_dom_sf"/>
</dbReference>
<dbReference type="PANTHER" id="PTHR10980">
    <property type="entry name" value="RHO GDP-DISSOCIATION INHIBITOR"/>
    <property type="match status" value="1"/>
</dbReference>
<dbReference type="PANTHER" id="PTHR10980:SF9">
    <property type="entry name" value="RHO GDP-DISSOCIATION INHIBITOR 1"/>
    <property type="match status" value="1"/>
</dbReference>
<dbReference type="Pfam" id="PF02115">
    <property type="entry name" value="Rho_GDI"/>
    <property type="match status" value="1"/>
</dbReference>
<dbReference type="PRINTS" id="PR00492">
    <property type="entry name" value="RHOGDI"/>
</dbReference>
<dbReference type="SUPFAM" id="SSF81296">
    <property type="entry name" value="E set domains"/>
    <property type="match status" value="1"/>
</dbReference>
<accession>P80237</accession>
<proteinExistence type="evidence at protein level"/>
<keyword id="KW-0007">Acetylation</keyword>
<keyword id="KW-0963">Cytoplasm</keyword>
<keyword id="KW-0903">Direct protein sequencing</keyword>
<keyword id="KW-0343">GTPase activation</keyword>
<keyword id="KW-1017">Isopeptide bond</keyword>
<keyword id="KW-1185">Reference proteome</keyword>
<keyword id="KW-0832">Ubl conjugation</keyword>
<protein>
    <recommendedName>
        <fullName>Rho GDP-dissociation inhibitor 1</fullName>
        <shortName>Rho GDI 1</shortName>
    </recommendedName>
    <alternativeName>
        <fullName>Rho-GDI alpha</fullName>
    </alternativeName>
</protein>
<comment type="function">
    <text evidence="1 2 3">Controls Rho proteins homeostasis. Regulates the GDP/GTP exchange reaction of the Rho proteins by inhibiting the dissociation of GDP from them, and the subsequent binding of GTP to them. Retains Rho proteins such as CDC42, RAC1 and RHOA in an inactive cytosolic pool, regulating their stability and protecting them from degradation. Actively involved in the recycling and distribution of activated Rho GTPases in the cell, mediates extraction from membranes of both inactive and activated molecules due its exceptionally high affinity for prenylated forms. Through the modulation of Rho proteins, may play a role in cell motility regulation. In glioma cells, inhibits cell migration and invasion by mediating the signals of SEMA5A and PLXNB3 that lead to inactivation of RAC1.</text>
</comment>
<comment type="subunit">
    <text evidence="1 2">Monomer (By similarity). Interacts with FER (By similarity). Interacts with PLXNB3 (By similarity). Forms a heterodimer with RAC1. Interacts with RHOA, the affinity is increased by three orders of magnitude when RHOA is prenylated. Interacts with PSMD10; the interaction increases ARHGDIA association with RHOA, leading to ARHGDIA-mediated inactivation of RHOA and ROCK and prolonged AKT activation. Interacts with KANK2; the interaction is direct and may regulate the interaction of ARHGDIA with RHOA, RAC1 and CDC42. Interacts with RHOC. Interacts with CDC42 (By similarity). Interacts with NGFR (via death domain); NGFR binding decreases the affinity for RHOA (By similarity).</text>
</comment>
<comment type="subcellular location">
    <subcellularLocation>
        <location evidence="1">Cytoplasm</location>
    </subcellularLocation>
</comment>
<comment type="PTM">
    <text>The N-terminus is blocked.</text>
</comment>
<comment type="similarity">
    <text evidence="4">Belongs to the Rho GDI family.</text>
</comment>
<reference key="1">
    <citation type="journal article" date="1993" name="Eur. J. Biochem.">
        <title>Role of the rac1 p21-GDP-dissociation inhibitor for rho heterodimer in the activation of the superoxide-forming NADPH oxidase of macrophages.</title>
        <authorList>
            <person name="Pick E."/>
            <person name="Gorzalczany Y."/>
            <person name="Engel S."/>
        </authorList>
    </citation>
    <scope>PROTEIN SEQUENCE</scope>
    <scope>FUNCTION</scope>
    <source>
        <strain>Hartley</strain>
        <tissue>Macrophage</tissue>
    </source>
</reference>
<feature type="chain" id="PRO_0000219012" description="Rho GDP-dissociation inhibitor 1">
    <location>
        <begin position="1" status="less than"/>
        <end position="111" status="greater than"/>
    </location>
</feature>
<feature type="modified residue" description="N6-acetyllysine; alternate" evidence="1">
    <location>
        <position position="60"/>
    </location>
</feature>
<feature type="modified residue" description="N6-succinyllysine; alternate" evidence="2">
    <location>
        <position position="60"/>
    </location>
</feature>
<feature type="cross-link" description="Glycyl lysine isopeptide (Lys-Gly) (interchain with G-Cter in SUMO1); alternate" evidence="1">
    <location>
        <position position="57"/>
    </location>
</feature>
<feature type="cross-link" description="Glycyl lysine isopeptide (Lys-Gly) (interchain with G-Cter in SUMO2); alternate" evidence="1">
    <location>
        <position position="57"/>
    </location>
</feature>
<feature type="cross-link" description="Glycyl lysine isopeptide (Lys-Gly) (interchain with G-Cter in SUMO1); alternate" evidence="1">
    <location>
        <position position="60"/>
    </location>
</feature>
<feature type="cross-link" description="Glycyl lysine isopeptide (Lys-Gly) (interchain with G-Cter in SUMO2); alternate" evidence="1">
    <location>
        <position position="60"/>
    </location>
</feature>
<feature type="unsure residue">
    <location>
        <position position="98"/>
    </location>
</feature>
<feature type="unsure residue">
    <location>
        <position position="100"/>
    </location>
</feature>
<feature type="non-consecutive residues" evidence="4">
    <location>
        <begin position="40"/>
        <end position="41"/>
    </location>
</feature>
<feature type="non-consecutive residues" evidence="4">
    <location>
        <begin position="46"/>
        <end position="47"/>
    </location>
</feature>
<feature type="non-consecutive residues" evidence="4">
    <location>
        <begin position="86"/>
        <end position="87"/>
    </location>
</feature>
<feature type="non-terminal residue">
    <location>
        <position position="1"/>
    </location>
</feature>
<feature type="non-terminal residue">
    <location>
        <position position="111"/>
    </location>
</feature>
<organism>
    <name type="scientific">Cavia porcellus</name>
    <name type="common">Guinea pig</name>
    <dbReference type="NCBI Taxonomy" id="10141"/>
    <lineage>
        <taxon>Eukaryota</taxon>
        <taxon>Metazoa</taxon>
        <taxon>Chordata</taxon>
        <taxon>Craniata</taxon>
        <taxon>Vertebrata</taxon>
        <taxon>Euteleostomi</taxon>
        <taxon>Mammalia</taxon>
        <taxon>Eutheria</taxon>
        <taxon>Euarchontoglires</taxon>
        <taxon>Glires</taxon>
        <taxon>Rodentia</taxon>
        <taxon>Hystricomorpha</taxon>
        <taxon>Caviidae</taxon>
        <taxon>Cavia</taxon>
    </lineage>
</organism>
<name>GDIR1_CAVPO</name>
<evidence type="ECO:0000250" key="1">
    <source>
        <dbReference type="UniProtKB" id="P52565"/>
    </source>
</evidence>
<evidence type="ECO:0000250" key="2">
    <source>
        <dbReference type="UniProtKB" id="Q99PT1"/>
    </source>
</evidence>
<evidence type="ECO:0000269" key="3">
    <source>
    </source>
</evidence>
<evidence type="ECO:0000305" key="4"/>
<gene>
    <name type="primary">ARHGDIA</name>
</gene>
<sequence>VAVSADPNEPNVIVTRLTLVCSTAPGPLELDLTGDLESFKIKISFRYIQHTYRKGVKIDKTDYMVGSYGPRAEEYEFLTPMEEAPKGMLARFTDDDKTDHLSGERNLTIKK</sequence>